<protein>
    <recommendedName>
        <fullName evidence="1">Methionine aminopeptidase</fullName>
        <shortName evidence="1">MAP</shortName>
        <shortName evidence="1">MetAP</shortName>
        <ecNumber evidence="1">3.4.11.18</ecNumber>
    </recommendedName>
    <alternativeName>
        <fullName evidence="1">Peptidase M</fullName>
    </alternativeName>
</protein>
<proteinExistence type="inferred from homology"/>
<organism>
    <name type="scientific">Thermococcus kodakarensis (strain ATCC BAA-918 / JCM 12380 / KOD1)</name>
    <name type="common">Pyrococcus kodakaraensis (strain KOD1)</name>
    <dbReference type="NCBI Taxonomy" id="69014"/>
    <lineage>
        <taxon>Archaea</taxon>
        <taxon>Methanobacteriati</taxon>
        <taxon>Methanobacteriota</taxon>
        <taxon>Thermococci</taxon>
        <taxon>Thermococcales</taxon>
        <taxon>Thermococcaceae</taxon>
        <taxon>Thermococcus</taxon>
    </lineage>
</organism>
<keyword id="KW-0031">Aminopeptidase</keyword>
<keyword id="KW-0378">Hydrolase</keyword>
<keyword id="KW-0479">Metal-binding</keyword>
<keyword id="KW-0645">Protease</keyword>
<keyword id="KW-1185">Reference proteome</keyword>
<sequence length="295" mass="33021">MDEREALIKAGEIARQVKKEVVDLIKPGAKLYDIAEFVERRIVELGGKPAFPCNLSINEIAAHYTPYKGDGTVLKEGDYLKLDIGVHVDGYIADTAVTFRVGMEEDELMEAAREALENAIATVRAGVMIRDVARAIEETIRGKGFNPIVNLSGHKVERYKLHAGVSVPNVYREADTYVLQEGDVFAIEPFATTGAGQVIEVPPALIFMYLRDRPVRMLQARRLLMHIKKNYKTLPFAYRWLQDFLPEGQLKLALAQLEKAGAIYAYPILREVRGGMVAQFEHTVIVEKEGAYITT</sequence>
<comment type="function">
    <text evidence="1">Removes the N-terminal methionine from nascent proteins. The N-terminal methionine is often cleaved when the second residue in the primary sequence is small and uncharged (Met-Ala-, Cys, Gly, Pro, Ser, Thr, or Val).</text>
</comment>
<comment type="catalytic activity">
    <reaction evidence="1">
        <text>Release of N-terminal amino acids, preferentially methionine, from peptides and arylamides.</text>
        <dbReference type="EC" id="3.4.11.18"/>
    </reaction>
</comment>
<comment type="cofactor">
    <cofactor evidence="1">
        <name>Co(2+)</name>
        <dbReference type="ChEBI" id="CHEBI:48828"/>
    </cofactor>
    <cofactor evidence="1">
        <name>Zn(2+)</name>
        <dbReference type="ChEBI" id="CHEBI:29105"/>
    </cofactor>
    <cofactor evidence="1">
        <name>Mn(2+)</name>
        <dbReference type="ChEBI" id="CHEBI:29035"/>
    </cofactor>
    <cofactor evidence="1">
        <name>Fe(2+)</name>
        <dbReference type="ChEBI" id="CHEBI:29033"/>
    </cofactor>
    <text evidence="1">Binds 2 divalent metal cations per subunit. Has a high-affinity and a low affinity metal-binding site. The true nature of the physiological cofactor is under debate. The enzyme is active with cobalt, zinc, manganese or divalent iron ions. Most likely, methionine aminopeptidases function as mononuclear Fe(2+)-metalloproteases under physiological conditions, and the catalytically relevant metal-binding site has been assigned to the histidine-containing high-affinity site.</text>
</comment>
<comment type="subunit">
    <text evidence="1">Monomer.</text>
</comment>
<comment type="similarity">
    <text evidence="1">Belongs to the peptidase M24A family. Methionine aminopeptidase archaeal type 2 subfamily.</text>
</comment>
<gene>
    <name evidence="1" type="primary">map</name>
    <name type="ordered locus">TK1183</name>
</gene>
<evidence type="ECO:0000255" key="1">
    <source>
        <dbReference type="HAMAP-Rule" id="MF_01975"/>
    </source>
</evidence>
<accession>Q5JGD1</accession>
<feature type="chain" id="PRO_0000148980" description="Methionine aminopeptidase">
    <location>
        <begin position="1"/>
        <end position="295"/>
    </location>
</feature>
<feature type="binding site" evidence="1">
    <location>
        <position position="63"/>
    </location>
    <ligand>
        <name>substrate</name>
    </ligand>
</feature>
<feature type="binding site" evidence="1">
    <location>
        <position position="83"/>
    </location>
    <ligand>
        <name>a divalent metal cation</name>
        <dbReference type="ChEBI" id="CHEBI:60240"/>
        <label>1</label>
    </ligand>
</feature>
<feature type="binding site" evidence="1">
    <location>
        <position position="94"/>
    </location>
    <ligand>
        <name>a divalent metal cation</name>
        <dbReference type="ChEBI" id="CHEBI:60240"/>
        <label>1</label>
    </ligand>
</feature>
<feature type="binding site" evidence="1">
    <location>
        <position position="94"/>
    </location>
    <ligand>
        <name>a divalent metal cation</name>
        <dbReference type="ChEBI" id="CHEBI:60240"/>
        <label>2</label>
        <note>catalytic</note>
    </ligand>
</feature>
<feature type="binding site" evidence="1">
    <location>
        <position position="154"/>
    </location>
    <ligand>
        <name>a divalent metal cation</name>
        <dbReference type="ChEBI" id="CHEBI:60240"/>
        <label>2</label>
        <note>catalytic</note>
    </ligand>
</feature>
<feature type="binding site" evidence="1">
    <location>
        <position position="162"/>
    </location>
    <ligand>
        <name>substrate</name>
    </ligand>
</feature>
<feature type="binding site" evidence="1">
    <location>
        <position position="188"/>
    </location>
    <ligand>
        <name>a divalent metal cation</name>
        <dbReference type="ChEBI" id="CHEBI:60240"/>
        <label>2</label>
        <note>catalytic</note>
    </ligand>
</feature>
<feature type="binding site" evidence="1">
    <location>
        <position position="281"/>
    </location>
    <ligand>
        <name>a divalent metal cation</name>
        <dbReference type="ChEBI" id="CHEBI:60240"/>
        <label>1</label>
    </ligand>
</feature>
<feature type="binding site" evidence="1">
    <location>
        <position position="281"/>
    </location>
    <ligand>
        <name>a divalent metal cation</name>
        <dbReference type="ChEBI" id="CHEBI:60240"/>
        <label>2</label>
        <note>catalytic</note>
    </ligand>
</feature>
<reference key="1">
    <citation type="journal article" date="2005" name="Genome Res.">
        <title>Complete genome sequence of the hyperthermophilic archaeon Thermococcus kodakaraensis KOD1 and comparison with Pyrococcus genomes.</title>
        <authorList>
            <person name="Fukui T."/>
            <person name="Atomi H."/>
            <person name="Kanai T."/>
            <person name="Matsumi R."/>
            <person name="Fujiwara S."/>
            <person name="Imanaka T."/>
        </authorList>
    </citation>
    <scope>NUCLEOTIDE SEQUENCE [LARGE SCALE GENOMIC DNA]</scope>
    <source>
        <strain>ATCC BAA-918 / JCM 12380 / KOD1</strain>
    </source>
</reference>
<dbReference type="EC" id="3.4.11.18" evidence="1"/>
<dbReference type="EMBL" id="AP006878">
    <property type="protein sequence ID" value="BAD85372.1"/>
    <property type="molecule type" value="Genomic_DNA"/>
</dbReference>
<dbReference type="RefSeq" id="WP_011250134.1">
    <property type="nucleotide sequence ID" value="NC_006624.1"/>
</dbReference>
<dbReference type="SMR" id="Q5JGD1"/>
<dbReference type="FunCoup" id="Q5JGD1">
    <property type="interactions" value="216"/>
</dbReference>
<dbReference type="STRING" id="69014.TK1183"/>
<dbReference type="MEROPS" id="M24.035"/>
<dbReference type="EnsemblBacteria" id="BAD85372">
    <property type="protein sequence ID" value="BAD85372"/>
    <property type="gene ID" value="TK1183"/>
</dbReference>
<dbReference type="GeneID" id="78447698"/>
<dbReference type="KEGG" id="tko:TK1183"/>
<dbReference type="PATRIC" id="fig|69014.16.peg.1157"/>
<dbReference type="eggNOG" id="arCOG01001">
    <property type="taxonomic scope" value="Archaea"/>
</dbReference>
<dbReference type="HOGENOM" id="CLU_015857_7_0_2"/>
<dbReference type="InParanoid" id="Q5JGD1"/>
<dbReference type="OrthoDB" id="372008at2157"/>
<dbReference type="PhylomeDB" id="Q5JGD1"/>
<dbReference type="Proteomes" id="UP000000536">
    <property type="component" value="Chromosome"/>
</dbReference>
<dbReference type="GO" id="GO:0005737">
    <property type="term" value="C:cytoplasm"/>
    <property type="evidence" value="ECO:0000318"/>
    <property type="project" value="GO_Central"/>
</dbReference>
<dbReference type="GO" id="GO:0004177">
    <property type="term" value="F:aminopeptidase activity"/>
    <property type="evidence" value="ECO:0000318"/>
    <property type="project" value="GO_Central"/>
</dbReference>
<dbReference type="GO" id="GO:0004239">
    <property type="term" value="F:initiator methionyl aminopeptidase activity"/>
    <property type="evidence" value="ECO:0007669"/>
    <property type="project" value="UniProtKB-UniRule"/>
</dbReference>
<dbReference type="GO" id="GO:0046872">
    <property type="term" value="F:metal ion binding"/>
    <property type="evidence" value="ECO:0007669"/>
    <property type="project" value="UniProtKB-UniRule"/>
</dbReference>
<dbReference type="GO" id="GO:0070006">
    <property type="term" value="F:metalloaminopeptidase activity"/>
    <property type="evidence" value="ECO:0007669"/>
    <property type="project" value="UniProtKB-UniRule"/>
</dbReference>
<dbReference type="GO" id="GO:0008235">
    <property type="term" value="F:metalloexopeptidase activity"/>
    <property type="evidence" value="ECO:0000318"/>
    <property type="project" value="GO_Central"/>
</dbReference>
<dbReference type="GO" id="GO:0006508">
    <property type="term" value="P:proteolysis"/>
    <property type="evidence" value="ECO:0007669"/>
    <property type="project" value="UniProtKB-KW"/>
</dbReference>
<dbReference type="CDD" id="cd01088">
    <property type="entry name" value="MetAP2"/>
    <property type="match status" value="1"/>
</dbReference>
<dbReference type="Gene3D" id="3.90.230.10">
    <property type="entry name" value="Creatinase/methionine aminopeptidase superfamily"/>
    <property type="match status" value="1"/>
</dbReference>
<dbReference type="Gene3D" id="1.10.10.10">
    <property type="entry name" value="Winged helix-like DNA-binding domain superfamily/Winged helix DNA-binding domain"/>
    <property type="match status" value="1"/>
</dbReference>
<dbReference type="HAMAP" id="MF_01975">
    <property type="entry name" value="MetAP_2_arc"/>
    <property type="match status" value="1"/>
</dbReference>
<dbReference type="InterPro" id="IPR036005">
    <property type="entry name" value="Creatinase/aminopeptidase-like"/>
</dbReference>
<dbReference type="InterPro" id="IPR050247">
    <property type="entry name" value="Met_Aminopeptidase_Type2"/>
</dbReference>
<dbReference type="InterPro" id="IPR028595">
    <property type="entry name" value="MetAP_archaeal"/>
</dbReference>
<dbReference type="InterPro" id="IPR000994">
    <property type="entry name" value="Pept_M24"/>
</dbReference>
<dbReference type="InterPro" id="IPR001714">
    <property type="entry name" value="Pept_M24_MAP"/>
</dbReference>
<dbReference type="InterPro" id="IPR002468">
    <property type="entry name" value="Pept_M24A_MAP2"/>
</dbReference>
<dbReference type="InterPro" id="IPR018349">
    <property type="entry name" value="Pept_M24A_MAP2_BS"/>
</dbReference>
<dbReference type="InterPro" id="IPR036388">
    <property type="entry name" value="WH-like_DNA-bd_sf"/>
</dbReference>
<dbReference type="InterPro" id="IPR036390">
    <property type="entry name" value="WH_DNA-bd_sf"/>
</dbReference>
<dbReference type="NCBIfam" id="TIGR00501">
    <property type="entry name" value="met_pdase_II"/>
    <property type="match status" value="1"/>
</dbReference>
<dbReference type="PANTHER" id="PTHR45777">
    <property type="entry name" value="METHIONINE AMINOPEPTIDASE 2"/>
    <property type="match status" value="1"/>
</dbReference>
<dbReference type="PANTHER" id="PTHR45777:SF2">
    <property type="entry name" value="METHIONINE AMINOPEPTIDASE 2"/>
    <property type="match status" value="1"/>
</dbReference>
<dbReference type="Pfam" id="PF00557">
    <property type="entry name" value="Peptidase_M24"/>
    <property type="match status" value="1"/>
</dbReference>
<dbReference type="PRINTS" id="PR00599">
    <property type="entry name" value="MAPEPTIDASE"/>
</dbReference>
<dbReference type="SUPFAM" id="SSF55920">
    <property type="entry name" value="Creatinase/aminopeptidase"/>
    <property type="match status" value="1"/>
</dbReference>
<dbReference type="SUPFAM" id="SSF46785">
    <property type="entry name" value="Winged helix' DNA-binding domain"/>
    <property type="match status" value="1"/>
</dbReference>
<dbReference type="PROSITE" id="PS01202">
    <property type="entry name" value="MAP_2"/>
    <property type="match status" value="1"/>
</dbReference>
<name>MAP2_THEKO</name>